<accession>C3PCY0</accession>
<protein>
    <recommendedName>
        <fullName evidence="1">Small, acid-soluble spore protein K</fullName>
        <shortName evidence="1">SASP K</shortName>
    </recommendedName>
</protein>
<dbReference type="EMBL" id="CP001598">
    <property type="protein sequence ID" value="ACQ50479.1"/>
    <property type="molecule type" value="Genomic_DNA"/>
</dbReference>
<dbReference type="RefSeq" id="WP_000517891.1">
    <property type="nucleotide sequence ID" value="NC_012659.1"/>
</dbReference>
<dbReference type="KEGG" id="bai:BAA_0580"/>
<dbReference type="HOGENOM" id="CLU_3076423_0_0_9"/>
<dbReference type="GO" id="GO:0042601">
    <property type="term" value="C:endospore-forming forespore"/>
    <property type="evidence" value="ECO:0007669"/>
    <property type="project" value="InterPro"/>
</dbReference>
<dbReference type="GO" id="GO:0030436">
    <property type="term" value="P:asexual sporulation"/>
    <property type="evidence" value="ECO:0007669"/>
    <property type="project" value="UniProtKB-UniRule"/>
</dbReference>
<dbReference type="GO" id="GO:0030435">
    <property type="term" value="P:sporulation resulting in formation of a cellular spore"/>
    <property type="evidence" value="ECO:0007669"/>
    <property type="project" value="UniProtKB-KW"/>
</dbReference>
<dbReference type="HAMAP" id="MF_01504">
    <property type="entry name" value="SspK"/>
    <property type="match status" value="1"/>
</dbReference>
<dbReference type="InterPro" id="IPR012611">
    <property type="entry name" value="SASP_SspK"/>
</dbReference>
<dbReference type="NCBIfam" id="NF002843">
    <property type="entry name" value="PRK03081.1"/>
    <property type="match status" value="1"/>
</dbReference>
<dbReference type="NCBIfam" id="TIGR03091">
    <property type="entry name" value="SASP_sspK"/>
    <property type="match status" value="1"/>
</dbReference>
<dbReference type="Pfam" id="PF08176">
    <property type="entry name" value="SspK"/>
    <property type="match status" value="1"/>
</dbReference>
<proteinExistence type="inferred from homology"/>
<keyword id="KW-0749">Sporulation</keyword>
<reference key="1">
    <citation type="submission" date="2009-04" db="EMBL/GenBank/DDBJ databases">
        <title>Genome sequence of Bacillus anthracis A0248.</title>
        <authorList>
            <person name="Dodson R.J."/>
            <person name="Munk A.C."/>
            <person name="Bruce D."/>
            <person name="Detter C."/>
            <person name="Tapia R."/>
            <person name="Sutton G."/>
            <person name="Sims D."/>
            <person name="Brettin T."/>
        </authorList>
    </citation>
    <scope>NUCLEOTIDE SEQUENCE [LARGE SCALE GENOMIC DNA]</scope>
    <source>
        <strain>A0248</strain>
    </source>
</reference>
<evidence type="ECO:0000255" key="1">
    <source>
        <dbReference type="HAMAP-Rule" id="MF_01504"/>
    </source>
</evidence>
<evidence type="ECO:0000256" key="2">
    <source>
        <dbReference type="SAM" id="MobiDB-lite"/>
    </source>
</evidence>
<feature type="chain" id="PRO_1000185022" description="Small, acid-soluble spore protein K">
    <location>
        <begin position="1"/>
        <end position="52"/>
    </location>
</feature>
<feature type="region of interest" description="Disordered" evidence="2">
    <location>
        <begin position="1"/>
        <end position="52"/>
    </location>
</feature>
<organism>
    <name type="scientific">Bacillus anthracis (strain A0248)</name>
    <dbReference type="NCBI Taxonomy" id="592021"/>
    <lineage>
        <taxon>Bacteria</taxon>
        <taxon>Bacillati</taxon>
        <taxon>Bacillota</taxon>
        <taxon>Bacilli</taxon>
        <taxon>Bacillales</taxon>
        <taxon>Bacillaceae</taxon>
        <taxon>Bacillus</taxon>
        <taxon>Bacillus cereus group</taxon>
    </lineage>
</organism>
<gene>
    <name evidence="1" type="primary">sspK</name>
    <name type="ordered locus">BAA_0580</name>
</gene>
<name>SSPK_BACAA</name>
<sequence>MGKQAEFWSESKNNSKIDGQPKAKSRFASKRPNGTINTHPQERMRAANQQEE</sequence>
<comment type="subcellular location">
    <subcellularLocation>
        <location evidence="1">Spore core</location>
    </subcellularLocation>
</comment>
<comment type="induction">
    <text evidence="1">Expressed only in the forespore compartment of sporulating cells.</text>
</comment>
<comment type="similarity">
    <text evidence="1">Belongs to the SspK family.</text>
</comment>